<reference key="1">
    <citation type="journal article" date="1999" name="Nature">
        <title>Sequence and analysis of chromosome 2 of the plant Arabidopsis thaliana.</title>
        <authorList>
            <person name="Lin X."/>
            <person name="Kaul S."/>
            <person name="Rounsley S.D."/>
            <person name="Shea T.P."/>
            <person name="Benito M.-I."/>
            <person name="Town C.D."/>
            <person name="Fujii C.Y."/>
            <person name="Mason T.M."/>
            <person name="Bowman C.L."/>
            <person name="Barnstead M.E."/>
            <person name="Feldblyum T.V."/>
            <person name="Buell C.R."/>
            <person name="Ketchum K.A."/>
            <person name="Lee J.J."/>
            <person name="Ronning C.M."/>
            <person name="Koo H.L."/>
            <person name="Moffat K.S."/>
            <person name="Cronin L.A."/>
            <person name="Shen M."/>
            <person name="Pai G."/>
            <person name="Van Aken S."/>
            <person name="Umayam L."/>
            <person name="Tallon L.J."/>
            <person name="Gill J.E."/>
            <person name="Adams M.D."/>
            <person name="Carrera A.J."/>
            <person name="Creasy T.H."/>
            <person name="Goodman H.M."/>
            <person name="Somerville C.R."/>
            <person name="Copenhaver G.P."/>
            <person name="Preuss D."/>
            <person name="Nierman W.C."/>
            <person name="White O."/>
            <person name="Eisen J.A."/>
            <person name="Salzberg S.L."/>
            <person name="Fraser C.M."/>
            <person name="Venter J.C."/>
        </authorList>
    </citation>
    <scope>NUCLEOTIDE SEQUENCE [LARGE SCALE GENOMIC DNA]</scope>
    <source>
        <strain>cv. Columbia</strain>
    </source>
</reference>
<reference key="2">
    <citation type="journal article" date="2017" name="Plant J.">
        <title>Araport11: a complete reannotation of the Arabidopsis thaliana reference genome.</title>
        <authorList>
            <person name="Cheng C.Y."/>
            <person name="Krishnakumar V."/>
            <person name="Chan A.P."/>
            <person name="Thibaud-Nissen F."/>
            <person name="Schobel S."/>
            <person name="Town C.D."/>
        </authorList>
    </citation>
    <scope>GENOME REANNOTATION</scope>
    <source>
        <strain>cv. Columbia</strain>
    </source>
</reference>
<reference key="3">
    <citation type="journal article" date="2003" name="Science">
        <title>Empirical analysis of transcriptional activity in the Arabidopsis genome.</title>
        <authorList>
            <person name="Yamada K."/>
            <person name="Lim J."/>
            <person name="Dale J.M."/>
            <person name="Chen H."/>
            <person name="Shinn P."/>
            <person name="Palm C.J."/>
            <person name="Southwick A.M."/>
            <person name="Wu H.C."/>
            <person name="Kim C.J."/>
            <person name="Nguyen M."/>
            <person name="Pham P.K."/>
            <person name="Cheuk R.F."/>
            <person name="Karlin-Newmann G."/>
            <person name="Liu S.X."/>
            <person name="Lam B."/>
            <person name="Sakano H."/>
            <person name="Wu T."/>
            <person name="Yu G."/>
            <person name="Miranda M."/>
            <person name="Quach H.L."/>
            <person name="Tripp M."/>
            <person name="Chang C.H."/>
            <person name="Lee J.M."/>
            <person name="Toriumi M.J."/>
            <person name="Chan M.M."/>
            <person name="Tang C.C."/>
            <person name="Onodera C.S."/>
            <person name="Deng J.M."/>
            <person name="Akiyama K."/>
            <person name="Ansari Y."/>
            <person name="Arakawa T."/>
            <person name="Banh J."/>
            <person name="Banno F."/>
            <person name="Bowser L."/>
            <person name="Brooks S.Y."/>
            <person name="Carninci P."/>
            <person name="Chao Q."/>
            <person name="Choy N."/>
            <person name="Enju A."/>
            <person name="Goldsmith A.D."/>
            <person name="Gurjal M."/>
            <person name="Hansen N.F."/>
            <person name="Hayashizaki Y."/>
            <person name="Johnson-Hopson C."/>
            <person name="Hsuan V.W."/>
            <person name="Iida K."/>
            <person name="Karnes M."/>
            <person name="Khan S."/>
            <person name="Koesema E."/>
            <person name="Ishida J."/>
            <person name="Jiang P.X."/>
            <person name="Jones T."/>
            <person name="Kawai J."/>
            <person name="Kamiya A."/>
            <person name="Meyers C."/>
            <person name="Nakajima M."/>
            <person name="Narusaka M."/>
            <person name="Seki M."/>
            <person name="Sakurai T."/>
            <person name="Satou M."/>
            <person name="Tamse R."/>
            <person name="Vaysberg M."/>
            <person name="Wallender E.K."/>
            <person name="Wong C."/>
            <person name="Yamamura Y."/>
            <person name="Yuan S."/>
            <person name="Shinozaki K."/>
            <person name="Davis R.W."/>
            <person name="Theologis A."/>
            <person name="Ecker J.R."/>
        </authorList>
    </citation>
    <scope>NUCLEOTIDE SEQUENCE [LARGE SCALE MRNA]</scope>
    <source>
        <strain>cv. Columbia</strain>
    </source>
</reference>
<reference key="4">
    <citation type="submission" date="2006-07" db="EMBL/GenBank/DDBJ databases">
        <title>Large-scale analysis of RIKEN Arabidopsis full-length (RAFL) cDNAs.</title>
        <authorList>
            <person name="Totoki Y."/>
            <person name="Seki M."/>
            <person name="Ishida J."/>
            <person name="Nakajima M."/>
            <person name="Enju A."/>
            <person name="Kamiya A."/>
            <person name="Narusaka M."/>
            <person name="Shin-i T."/>
            <person name="Nakagawa M."/>
            <person name="Sakamoto N."/>
            <person name="Oishi K."/>
            <person name="Kohara Y."/>
            <person name="Kobayashi M."/>
            <person name="Toyoda A."/>
            <person name="Sakaki Y."/>
            <person name="Sakurai T."/>
            <person name="Iida K."/>
            <person name="Akiyama K."/>
            <person name="Satou M."/>
            <person name="Toyoda T."/>
            <person name="Konagaya A."/>
            <person name="Carninci P."/>
            <person name="Kawai J."/>
            <person name="Hayashizaki Y."/>
            <person name="Shinozaki K."/>
        </authorList>
    </citation>
    <scope>NUCLEOTIDE SEQUENCE [LARGE SCALE MRNA] OF 460-650</scope>
    <source>
        <strain>cv. Columbia</strain>
    </source>
</reference>
<reference key="5">
    <citation type="journal article" date="2002" name="Plant Physiol.">
        <title>Inositol phospholipid metabolism in Arabidopsis. Characterized and putative isoforms of inositol phospholipid kinase and phosphoinositide-specific phospholipase C.</title>
        <authorList>
            <person name="Mueller-Roeber B."/>
            <person name="Pical C."/>
        </authorList>
    </citation>
    <scope>GENE FAMILY</scope>
    <scope>NOMENCLATURE</scope>
</reference>
<reference key="6">
    <citation type="journal article" date="2008" name="Biochem. J.">
        <title>Characterization of a new family of protein kinases from Arabidopsis containing phosphoinositide 3/4-kinase and ubiquitin-like domains.</title>
        <authorList>
            <person name="Galvao R.M."/>
            <person name="Kota U."/>
            <person name="Soderblom E.J."/>
            <person name="Goshe M.B."/>
            <person name="Boss W.F."/>
        </authorList>
    </citation>
    <scope>FUNCTION</scope>
    <scope>CATALYTIC ACTIVITY</scope>
    <scope>AUTOPHOSPHORYLATION</scope>
    <scope>GENE FAMILY</scope>
</reference>
<sequence length="650" mass="72762">MSRNLDSPVQTQMAVAVFKTPLTGASKMEGKQHHKHQHLQRQSSGRRVFVQTETGCVLGMELDRSDNVHTVKRRLQIALNFPTEESSLTYGDMVLTNDLSAVRNDSPLLLKRNFMHRSSSTPCLSPTGRDLQQKDRSGPIEILGHSDCFSIVKHMVKDIVKAMKMGVEPLPVHSGLGGAYYFRNKRGESVAIVKPTDEEPFAPNNPKGFVGKALGQPGLKSSVRVGETGFREVAAYLLDYGRFANVPPTALVKITHSVFNVNDGVKGNKPREKKLVSKIASFQKFVAHDFDASDHGTSSFPVTSVHRIGILDIRIFNTDRHGGNLLVKKLDGVGMFGQVELIPIDHGLCLPETLEDPYFEWIHWPQASLPFSDEEVDYIQSLDPVKDCDMLRRELPMIREACLRVLVLCTIFLKEASAYGLCLAEIGEMMTREFRPGEEEPSELEVVCIEAKRSVTERDVFSPRSDVVGEAEFQFDLDCDDLESVYSSKIQLTDDYFTKNPFSNGRSSLGKLEESIKEEEEDEEEEEDKTENTVPMIIMKDSFFSSAAFHDKAPSLSKLSTSMKNTHLSDTTRKNPKPLTRGKSENTSSGHKSANEQLPVSASFVKVADMKEDEWVLFLERFQELLGPAFAKRKTATLSKRQRLGTSCQF</sequence>
<gene>
    <name evidence="6" type="primary">PI4KG7</name>
    <name evidence="6" type="synonym">PI4KGAMMA7</name>
    <name evidence="6" type="synonym">UBDKGAMMA7</name>
    <name evidence="8" type="ordered locus">At2g03890</name>
    <name evidence="9" type="ORF">T18C20.9</name>
</gene>
<feature type="chain" id="PRO_0000423364" description="Phosphatidylinositol 4-kinase gamma 7">
    <location>
        <begin position="1"/>
        <end position="650"/>
    </location>
</feature>
<feature type="domain" description="Ubiquitin-like; degenerate">
    <location>
        <begin position="46"/>
        <end position="103"/>
    </location>
</feature>
<feature type="domain" description="PI3K/PI4K catalytic" evidence="3">
    <location>
        <begin position="166"/>
        <end position="463"/>
    </location>
</feature>
<feature type="region of interest" description="G-loop" evidence="3">
    <location>
        <begin position="172"/>
        <end position="178"/>
    </location>
</feature>
<feature type="region of interest" description="Catalytic loop" evidence="3">
    <location>
        <begin position="316"/>
        <end position="324"/>
    </location>
</feature>
<feature type="region of interest" description="Activation loop" evidence="3">
    <location>
        <begin position="343"/>
        <end position="369"/>
    </location>
</feature>
<feature type="region of interest" description="Disordered" evidence="4">
    <location>
        <begin position="508"/>
        <end position="534"/>
    </location>
</feature>
<feature type="region of interest" description="Disordered" evidence="4">
    <location>
        <begin position="560"/>
        <end position="595"/>
    </location>
</feature>
<feature type="compositionally biased region" description="Acidic residues" evidence="4">
    <location>
        <begin position="516"/>
        <end position="529"/>
    </location>
</feature>
<feature type="compositionally biased region" description="Polar residues" evidence="4">
    <location>
        <begin position="560"/>
        <end position="569"/>
    </location>
</feature>
<feature type="compositionally biased region" description="Polar residues" evidence="4">
    <location>
        <begin position="585"/>
        <end position="595"/>
    </location>
</feature>
<feature type="binding site" evidence="1">
    <location>
        <begin position="173"/>
        <end position="179"/>
    </location>
    <ligand>
        <name>ATP</name>
        <dbReference type="ChEBI" id="CHEBI:30616"/>
    </ligand>
</feature>
<feature type="binding site" evidence="1">
    <location>
        <position position="194"/>
    </location>
    <ligand>
        <name>ATP</name>
        <dbReference type="ChEBI" id="CHEBI:30616"/>
    </ligand>
</feature>
<feature type="binding site" evidence="1">
    <location>
        <begin position="283"/>
        <end position="286"/>
    </location>
    <ligand>
        <name>ATP</name>
        <dbReference type="ChEBI" id="CHEBI:30616"/>
    </ligand>
</feature>
<feature type="binding site" evidence="1">
    <location>
        <position position="345"/>
    </location>
    <ligand>
        <name>ATP</name>
        <dbReference type="ChEBI" id="CHEBI:30616"/>
    </ligand>
</feature>
<feature type="modified residue" description="Phosphoserine" evidence="2">
    <location>
        <position position="593"/>
    </location>
</feature>
<dbReference type="EC" id="2.7.1.67" evidence="5"/>
<dbReference type="EMBL" id="AC007196">
    <property type="protein sequence ID" value="AAD24822.2"/>
    <property type="molecule type" value="Genomic_DNA"/>
</dbReference>
<dbReference type="EMBL" id="CP002685">
    <property type="protein sequence ID" value="AEC05763.1"/>
    <property type="molecule type" value="Genomic_DNA"/>
</dbReference>
<dbReference type="EMBL" id="AY056101">
    <property type="protein sequence ID" value="AAL06989.1"/>
    <property type="molecule type" value="mRNA"/>
</dbReference>
<dbReference type="EMBL" id="BT002696">
    <property type="protein sequence ID" value="AAO11612.1"/>
    <property type="molecule type" value="mRNA"/>
</dbReference>
<dbReference type="EMBL" id="AK229831">
    <property type="protein sequence ID" value="BAF01661.1"/>
    <property type="molecule type" value="mRNA"/>
</dbReference>
<dbReference type="PIR" id="D84453">
    <property type="entry name" value="D84453"/>
</dbReference>
<dbReference type="RefSeq" id="NP_565307.1">
    <molecule id="Q9SI52-1"/>
    <property type="nucleotide sequence ID" value="NM_126434.4"/>
</dbReference>
<dbReference type="SMR" id="Q9SI52"/>
<dbReference type="BioGRID" id="316">
    <property type="interactions" value="1"/>
</dbReference>
<dbReference type="FunCoup" id="Q9SI52">
    <property type="interactions" value="804"/>
</dbReference>
<dbReference type="STRING" id="3702.Q9SI52"/>
<dbReference type="iPTMnet" id="Q9SI52"/>
<dbReference type="PaxDb" id="3702-AT2G03890.1"/>
<dbReference type="ProteomicsDB" id="251407">
    <molecule id="Q9SI52-1"/>
</dbReference>
<dbReference type="EnsemblPlants" id="AT2G03890.1">
    <molecule id="Q9SI52-1"/>
    <property type="protein sequence ID" value="AT2G03890.1"/>
    <property type="gene ID" value="AT2G03890"/>
</dbReference>
<dbReference type="GeneID" id="814915"/>
<dbReference type="Gramene" id="AT2G03890.1">
    <molecule id="Q9SI52-1"/>
    <property type="protein sequence ID" value="AT2G03890.1"/>
    <property type="gene ID" value="AT2G03890"/>
</dbReference>
<dbReference type="KEGG" id="ath:AT2G03890"/>
<dbReference type="Araport" id="AT2G03890"/>
<dbReference type="TAIR" id="AT2G03890">
    <property type="gene designation" value="PI4K GAMMA 7"/>
</dbReference>
<dbReference type="eggNOG" id="KOG2381">
    <property type="taxonomic scope" value="Eukaryota"/>
</dbReference>
<dbReference type="HOGENOM" id="CLU_027241_1_1_1"/>
<dbReference type="InParanoid" id="Q9SI52"/>
<dbReference type="OMA" id="ENGYMAN"/>
<dbReference type="OrthoDB" id="5839at2759"/>
<dbReference type="PhylomeDB" id="Q9SI52"/>
<dbReference type="PRO" id="PR:Q9SI52"/>
<dbReference type="Proteomes" id="UP000006548">
    <property type="component" value="Chromosome 2"/>
</dbReference>
<dbReference type="ExpressionAtlas" id="Q9SI52">
    <property type="expression patterns" value="baseline and differential"/>
</dbReference>
<dbReference type="GO" id="GO:0004430">
    <property type="term" value="F:1-phosphatidylinositol 4-kinase activity"/>
    <property type="evidence" value="ECO:0000314"/>
    <property type="project" value="TAIR"/>
</dbReference>
<dbReference type="GO" id="GO:0005524">
    <property type="term" value="F:ATP binding"/>
    <property type="evidence" value="ECO:0007669"/>
    <property type="project" value="UniProtKB-KW"/>
</dbReference>
<dbReference type="GO" id="GO:0046854">
    <property type="term" value="P:phosphatidylinositol phosphate biosynthetic process"/>
    <property type="evidence" value="ECO:0000314"/>
    <property type="project" value="TAIR"/>
</dbReference>
<dbReference type="GO" id="GO:0046777">
    <property type="term" value="P:protein autophosphorylation"/>
    <property type="evidence" value="ECO:0000314"/>
    <property type="project" value="UniProtKB"/>
</dbReference>
<dbReference type="CDD" id="cd17039">
    <property type="entry name" value="Ubl_ubiquitin_like"/>
    <property type="match status" value="1"/>
</dbReference>
<dbReference type="Gene3D" id="3.10.20.90">
    <property type="entry name" value="Phosphatidylinositol 3-kinase Catalytic Subunit, Chain A, domain 1"/>
    <property type="match status" value="1"/>
</dbReference>
<dbReference type="InterPro" id="IPR044571">
    <property type="entry name" value="P4KG1-8"/>
</dbReference>
<dbReference type="InterPro" id="IPR000403">
    <property type="entry name" value="PI3/4_kinase_cat_dom"/>
</dbReference>
<dbReference type="InterPro" id="IPR029071">
    <property type="entry name" value="Ubiquitin-like_domsf"/>
</dbReference>
<dbReference type="PANTHER" id="PTHR45800:SF11">
    <property type="entry name" value="PHOSPHATIDYLINOSITOL 3-KINASE-RELATED PROTEIN KINASE"/>
    <property type="match status" value="1"/>
</dbReference>
<dbReference type="PANTHER" id="PTHR45800">
    <property type="entry name" value="PHOSPHATIDYLINOSITOL 4-KINASE GAMMA"/>
    <property type="match status" value="1"/>
</dbReference>
<dbReference type="Pfam" id="PF00454">
    <property type="entry name" value="PI3_PI4_kinase"/>
    <property type="match status" value="1"/>
</dbReference>
<dbReference type="SUPFAM" id="SSF54236">
    <property type="entry name" value="Ubiquitin-like"/>
    <property type="match status" value="1"/>
</dbReference>
<dbReference type="PROSITE" id="PS50290">
    <property type="entry name" value="PI3_4_KINASE_3"/>
    <property type="match status" value="1"/>
</dbReference>
<name>P4KG7_ARATH</name>
<comment type="function">
    <text evidence="1 5">The phosphorylation of phosphatidylinositol (PI) to PI4P is the first committed step in the generation of phosphatidylinositol 4,5-bisphosphate (PIP2), a precursor of the second messenger inositol 1,4,5-trisphosphate (InsP3) (By similarity). Undergoes autophosphorylation and phosphorylates serine/threonine residues of protein substrates (PubMed:17880284).</text>
</comment>
<comment type="catalytic activity">
    <reaction evidence="5">
        <text>a 1,2-diacyl-sn-glycero-3-phospho-(1D-myo-inositol) + ATP = a 1,2-diacyl-sn-glycero-3-phospho-(1D-myo-inositol 4-phosphate) + ADP + H(+)</text>
        <dbReference type="Rhea" id="RHEA:19877"/>
        <dbReference type="ChEBI" id="CHEBI:15378"/>
        <dbReference type="ChEBI" id="CHEBI:30616"/>
        <dbReference type="ChEBI" id="CHEBI:57880"/>
        <dbReference type="ChEBI" id="CHEBI:58178"/>
        <dbReference type="ChEBI" id="CHEBI:456216"/>
        <dbReference type="EC" id="2.7.1.67"/>
    </reaction>
    <physiologicalReaction direction="left-to-right" evidence="5">
        <dbReference type="Rhea" id="RHEA:19878"/>
    </physiologicalReaction>
</comment>
<comment type="alternative products">
    <event type="alternative splicing"/>
    <isoform>
        <id>Q9SI52-1</id>
        <name>1</name>
        <sequence type="displayed"/>
    </isoform>
    <text>A number of isoforms are produced. According to EST sequences.</text>
</comment>
<comment type="similarity">
    <text evidence="7">Belongs to the PI3/PI4-kinase family. Type II PI4K subfamily.</text>
</comment>
<keyword id="KW-0025">Alternative splicing</keyword>
<keyword id="KW-0067">ATP-binding</keyword>
<keyword id="KW-0418">Kinase</keyword>
<keyword id="KW-0547">Nucleotide-binding</keyword>
<keyword id="KW-0597">Phosphoprotein</keyword>
<keyword id="KW-1185">Reference proteome</keyword>
<keyword id="KW-0808">Transferase</keyword>
<proteinExistence type="evidence at protein level"/>
<organism>
    <name type="scientific">Arabidopsis thaliana</name>
    <name type="common">Mouse-ear cress</name>
    <dbReference type="NCBI Taxonomy" id="3702"/>
    <lineage>
        <taxon>Eukaryota</taxon>
        <taxon>Viridiplantae</taxon>
        <taxon>Streptophyta</taxon>
        <taxon>Embryophyta</taxon>
        <taxon>Tracheophyta</taxon>
        <taxon>Spermatophyta</taxon>
        <taxon>Magnoliopsida</taxon>
        <taxon>eudicotyledons</taxon>
        <taxon>Gunneridae</taxon>
        <taxon>Pentapetalae</taxon>
        <taxon>rosids</taxon>
        <taxon>malvids</taxon>
        <taxon>Brassicales</taxon>
        <taxon>Brassicaceae</taxon>
        <taxon>Camelineae</taxon>
        <taxon>Arabidopsis</taxon>
    </lineage>
</organism>
<evidence type="ECO:0000250" key="1">
    <source>
        <dbReference type="UniProtKB" id="Q9BTU6"/>
    </source>
</evidence>
<evidence type="ECO:0000250" key="2">
    <source>
        <dbReference type="UniProtKB" id="Q9C671"/>
    </source>
</evidence>
<evidence type="ECO:0000255" key="3">
    <source>
        <dbReference type="PROSITE-ProRule" id="PRU00269"/>
    </source>
</evidence>
<evidence type="ECO:0000256" key="4">
    <source>
        <dbReference type="SAM" id="MobiDB-lite"/>
    </source>
</evidence>
<evidence type="ECO:0000269" key="5">
    <source>
    </source>
</evidence>
<evidence type="ECO:0000303" key="6">
    <source>
    </source>
</evidence>
<evidence type="ECO:0000305" key="7"/>
<evidence type="ECO:0000312" key="8">
    <source>
        <dbReference type="Araport" id="AT2G03890"/>
    </source>
</evidence>
<evidence type="ECO:0000312" key="9">
    <source>
        <dbReference type="EMBL" id="AAD24822.2"/>
    </source>
</evidence>
<protein>
    <recommendedName>
        <fullName evidence="6">Phosphatidylinositol 4-kinase gamma 7</fullName>
        <shortName evidence="6">AtPI4Kgamma7</shortName>
        <shortName evidence="6">PI-4Kgamma7</shortName>
        <shortName evidence="6">PI4K gamma 7</shortName>
        <ecNumber evidence="5">2.7.1.67</ecNumber>
    </recommendedName>
    <alternativeName>
        <fullName evidence="6">Ubiquitin-like domain kinase gamma 7</fullName>
        <shortName evidence="6">UbDK gamma 7</shortName>
    </alternativeName>
</protein>
<accession>Q9SI52</accession>
<accession>Q0WMJ0</accession>
<accession>Q940C9</accession>